<evidence type="ECO:0000256" key="1">
    <source>
        <dbReference type="SAM" id="MobiDB-lite"/>
    </source>
</evidence>
<evidence type="ECO:0000305" key="2"/>
<organism>
    <name type="scientific">Yersinia pseudotuberculosis serotype I (strain IP32953)</name>
    <dbReference type="NCBI Taxonomy" id="273123"/>
    <lineage>
        <taxon>Bacteria</taxon>
        <taxon>Pseudomonadati</taxon>
        <taxon>Pseudomonadota</taxon>
        <taxon>Gammaproteobacteria</taxon>
        <taxon>Enterobacterales</taxon>
        <taxon>Yersiniaceae</taxon>
        <taxon>Yersinia</taxon>
    </lineage>
</organism>
<sequence>MNKITTRSPLEPEYQPLGKPHHALQACVDFEQALLHNNKGNCHPKEESLKPVRPHDLGKKEGQKGDGLRAHAPLAATSQPGRKEVGLKPQHNHQNNHDFNLSPLAEGATNRAHLYQQDSRFDDRVESIINALMPLAPFLEGVTCETGTSSESPCEPSGHDELFVQQSPIDSAQPVQLNTKPTVQPLNPAADGAEVIVWSVGRETPASIAKNQRDSRQKRLAEEPLALHQKALPEICPPAVSATPDDHLVARWCATPVTEVAEKSARFPYKATVQSEQLDMTELADRSQHLTDGVDSSKDTIEPPRPEELLLPREETLPEMYSLSFTAPVVTPGDHLLATMRATRLASVSEQLIQLAQRLAVELELRGGSSQVTQLHLNLPELGAIMVRIAEIPGKLHVELIASREALRILAQGSYDLLERLQRIEPTQLDFQASDDSEQESRQKRHVYEEWEAEE</sequence>
<accession>Q663J7</accession>
<accession>P40295</accession>
<dbReference type="EMBL" id="L25667">
    <property type="protein sequence ID" value="AAA27676.1"/>
    <property type="molecule type" value="Genomic_DNA"/>
</dbReference>
<dbReference type="EMBL" id="BX936399">
    <property type="protein sequence ID" value="CAF25412.2"/>
    <property type="molecule type" value="Genomic_DNA"/>
</dbReference>
<dbReference type="RefSeq" id="WP_011191386.1">
    <property type="nucleotide sequence ID" value="NC_006153.2"/>
</dbReference>
<dbReference type="SMR" id="Q663J7"/>
<dbReference type="KEGG" id="ypo:BZ17_4265"/>
<dbReference type="KEGG" id="yps:pYV0069"/>
<dbReference type="PATRIC" id="fig|273123.14.peg.4501"/>
<dbReference type="Proteomes" id="UP000001011">
    <property type="component" value="Plasmid pYV"/>
</dbReference>
<dbReference type="GO" id="GO:0005737">
    <property type="term" value="C:cytoplasm"/>
    <property type="evidence" value="ECO:0007669"/>
    <property type="project" value="UniProtKB-SubCell"/>
</dbReference>
<dbReference type="CDD" id="cd17467">
    <property type="entry name" value="T3SS_YscP_C"/>
    <property type="match status" value="1"/>
</dbReference>
<dbReference type="Gene3D" id="3.30.750.140">
    <property type="match status" value="1"/>
</dbReference>
<dbReference type="InterPro" id="IPR021136">
    <property type="entry name" value="Flagellar_hook_control-like_C"/>
</dbReference>
<dbReference type="InterPro" id="IPR038610">
    <property type="entry name" value="FliK-like_C_sf"/>
</dbReference>
<dbReference type="InterPro" id="IPR013354">
    <property type="entry name" value="T3SS_YscP_C"/>
</dbReference>
<dbReference type="NCBIfam" id="TIGR02514">
    <property type="entry name" value="type_III_yscP"/>
    <property type="match status" value="1"/>
</dbReference>
<dbReference type="Pfam" id="PF02120">
    <property type="entry name" value="Flg_hook"/>
    <property type="match status" value="1"/>
</dbReference>
<geneLocation type="plasmid">
    <name>pIB1</name>
</geneLocation>
<geneLocation type="plasmid">
    <name>pYV</name>
</geneLocation>
<name>YSCP_YERPS</name>
<proteinExistence type="inferred from homology"/>
<comment type="function">
    <text>Component of the yop secretion machinery.</text>
</comment>
<comment type="subcellular location">
    <subcellularLocation>
        <location evidence="2">Cytoplasm</location>
    </subcellularLocation>
</comment>
<comment type="similarity">
    <text evidence="2">Belongs to the SpaN family.</text>
</comment>
<reference key="1">
    <citation type="journal article" date="1994" name="J. Bacteriol.">
        <title>The lcrB (yscN/U) gene cluster of Yersinia pseudotuberculosis is involved in Yop secretion and shows high homology to the spa gene clusters of Shigella flexneri and Salmonella typhimurium.</title>
        <authorList>
            <person name="Bergman T."/>
            <person name="Erickson K."/>
            <person name="Galyov E."/>
            <person name="Persson C."/>
            <person name="Wolf-Watz H."/>
        </authorList>
    </citation>
    <scope>NUCLEOTIDE SEQUENCE [GENOMIC DNA]</scope>
    <source>
        <strain>YPIII / Serotype O:3</strain>
        <plasmid>pIB1</plasmid>
    </source>
</reference>
<reference key="2">
    <citation type="journal article" date="2004" name="Proc. Natl. Acad. Sci. U.S.A.">
        <title>Insights into the evolution of Yersinia pestis through whole-genome comparison with Yersinia pseudotuberculosis.</title>
        <authorList>
            <person name="Chain P.S.G."/>
            <person name="Carniel E."/>
            <person name="Larimer F.W."/>
            <person name="Lamerdin J."/>
            <person name="Stoutland P.O."/>
            <person name="Regala W.M."/>
            <person name="Georgescu A.M."/>
            <person name="Vergez L.M."/>
            <person name="Land M.L."/>
            <person name="Motin V.L."/>
            <person name="Brubaker R.R."/>
            <person name="Fowler J."/>
            <person name="Hinnebusch J."/>
            <person name="Marceau M."/>
            <person name="Medigue C."/>
            <person name="Simonet M."/>
            <person name="Chenal-Francisque V."/>
            <person name="Souza B."/>
            <person name="Dacheux D."/>
            <person name="Elliott J.M."/>
            <person name="Derbise A."/>
            <person name="Hauser L.J."/>
            <person name="Garcia E."/>
        </authorList>
    </citation>
    <scope>NUCLEOTIDE SEQUENCE [LARGE SCALE GENOMIC DNA]</scope>
    <source>
        <strain>IP32953</strain>
        <plasmid>pYV</plasmid>
    </source>
</reference>
<reference key="3">
    <citation type="submission" date="2006-06" db="EMBL/GenBank/DDBJ databases">
        <authorList>
            <person name="Chain P.S.G."/>
            <person name="Carniel E."/>
            <person name="Larimer F.W."/>
            <person name="Lamerdin J."/>
            <person name="Stoutland P.O."/>
            <person name="Regala W.M."/>
            <person name="Georgescu A.M."/>
            <person name="Vergez L.M."/>
            <person name="Land M.L."/>
            <person name="Motin V.L."/>
            <person name="Brubaker R.R."/>
            <person name="Fowler J."/>
            <person name="Hinnebusch J."/>
            <person name="Marceau M."/>
            <person name="Medigue C."/>
            <person name="Simonet M."/>
            <person name="Chenal-Francisque V."/>
            <person name="Souza B."/>
            <person name="Dacheux D."/>
            <person name="Elliott J.M."/>
            <person name="Derbise A."/>
            <person name="Hauser L.J."/>
            <person name="Garcia E."/>
        </authorList>
    </citation>
    <scope>SEQUENCE REVISION</scope>
</reference>
<feature type="chain" id="PRO_0000180942" description="Yop proteins translocation protein P">
    <location>
        <begin position="1"/>
        <end position="455"/>
    </location>
</feature>
<feature type="region of interest" description="Disordered" evidence="1">
    <location>
        <begin position="38"/>
        <end position="82"/>
    </location>
</feature>
<feature type="region of interest" description="Disordered" evidence="1">
    <location>
        <begin position="430"/>
        <end position="455"/>
    </location>
</feature>
<feature type="compositionally biased region" description="Basic and acidic residues" evidence="1">
    <location>
        <begin position="43"/>
        <end position="69"/>
    </location>
</feature>
<feature type="compositionally biased region" description="Basic and acidic residues" evidence="1">
    <location>
        <begin position="439"/>
        <end position="449"/>
    </location>
</feature>
<feature type="sequence conflict" description="In Ref. 1; AAA27676." evidence="2" ref="1">
    <original>T</original>
    <variation>S</variation>
    <location>
        <position position="179"/>
    </location>
</feature>
<feature type="sequence conflict" description="In Ref. 1; AAA27676." evidence="2" ref="1">
    <original>E</original>
    <variation>K</variation>
    <location>
        <position position="308"/>
    </location>
</feature>
<gene>
    <name type="primary">yscP</name>
    <name type="ordered locus">pYV0069</name>
</gene>
<protein>
    <recommendedName>
        <fullName>Yop proteins translocation protein P</fullName>
    </recommendedName>
</protein>
<keyword id="KW-0963">Cytoplasm</keyword>
<keyword id="KW-0614">Plasmid</keyword>
<keyword id="KW-0843">Virulence</keyword>